<gene>
    <name evidence="1" type="primary">ribA</name>
    <name type="ordered locus">Ssed_1603</name>
</gene>
<proteinExistence type="inferred from homology"/>
<feature type="chain" id="PRO_1000077263" description="GTP cyclohydrolase-2">
    <location>
        <begin position="1"/>
        <end position="205"/>
    </location>
</feature>
<feature type="active site" description="Proton acceptor" evidence="1">
    <location>
        <position position="126"/>
    </location>
</feature>
<feature type="active site" description="Nucleophile" evidence="1">
    <location>
        <position position="128"/>
    </location>
</feature>
<feature type="binding site" evidence="1">
    <location>
        <begin position="49"/>
        <end position="53"/>
    </location>
    <ligand>
        <name>GTP</name>
        <dbReference type="ChEBI" id="CHEBI:37565"/>
    </ligand>
</feature>
<feature type="binding site" evidence="1">
    <location>
        <position position="54"/>
    </location>
    <ligand>
        <name>Zn(2+)</name>
        <dbReference type="ChEBI" id="CHEBI:29105"/>
        <note>catalytic</note>
    </ligand>
</feature>
<feature type="binding site" evidence="1">
    <location>
        <position position="65"/>
    </location>
    <ligand>
        <name>Zn(2+)</name>
        <dbReference type="ChEBI" id="CHEBI:29105"/>
        <note>catalytic</note>
    </ligand>
</feature>
<feature type="binding site" evidence="1">
    <location>
        <position position="67"/>
    </location>
    <ligand>
        <name>Zn(2+)</name>
        <dbReference type="ChEBI" id="CHEBI:29105"/>
        <note>catalytic</note>
    </ligand>
</feature>
<feature type="binding site" evidence="1">
    <location>
        <position position="70"/>
    </location>
    <ligand>
        <name>GTP</name>
        <dbReference type="ChEBI" id="CHEBI:37565"/>
    </ligand>
</feature>
<feature type="binding site" evidence="1">
    <location>
        <begin position="92"/>
        <end position="94"/>
    </location>
    <ligand>
        <name>GTP</name>
        <dbReference type="ChEBI" id="CHEBI:37565"/>
    </ligand>
</feature>
<feature type="binding site" evidence="1">
    <location>
        <position position="114"/>
    </location>
    <ligand>
        <name>GTP</name>
        <dbReference type="ChEBI" id="CHEBI:37565"/>
    </ligand>
</feature>
<feature type="binding site" evidence="1">
    <location>
        <position position="149"/>
    </location>
    <ligand>
        <name>GTP</name>
        <dbReference type="ChEBI" id="CHEBI:37565"/>
    </ligand>
</feature>
<feature type="binding site" evidence="1">
    <location>
        <position position="154"/>
    </location>
    <ligand>
        <name>GTP</name>
        <dbReference type="ChEBI" id="CHEBI:37565"/>
    </ligand>
</feature>
<evidence type="ECO:0000255" key="1">
    <source>
        <dbReference type="HAMAP-Rule" id="MF_00179"/>
    </source>
</evidence>
<dbReference type="EC" id="3.5.4.25" evidence="1"/>
<dbReference type="EMBL" id="CP000821">
    <property type="protein sequence ID" value="ABV36214.1"/>
    <property type="molecule type" value="Genomic_DNA"/>
</dbReference>
<dbReference type="RefSeq" id="WP_012141950.1">
    <property type="nucleotide sequence ID" value="NC_009831.1"/>
</dbReference>
<dbReference type="SMR" id="A8FTP1"/>
<dbReference type="STRING" id="425104.Ssed_1603"/>
<dbReference type="KEGG" id="sse:Ssed_1603"/>
<dbReference type="eggNOG" id="COG0807">
    <property type="taxonomic scope" value="Bacteria"/>
</dbReference>
<dbReference type="HOGENOM" id="CLU_020273_2_1_6"/>
<dbReference type="OrthoDB" id="9793111at2"/>
<dbReference type="UniPathway" id="UPA00275">
    <property type="reaction ID" value="UER00400"/>
</dbReference>
<dbReference type="Proteomes" id="UP000002015">
    <property type="component" value="Chromosome"/>
</dbReference>
<dbReference type="GO" id="GO:0005829">
    <property type="term" value="C:cytosol"/>
    <property type="evidence" value="ECO:0007669"/>
    <property type="project" value="TreeGrafter"/>
</dbReference>
<dbReference type="GO" id="GO:0005525">
    <property type="term" value="F:GTP binding"/>
    <property type="evidence" value="ECO:0007669"/>
    <property type="project" value="UniProtKB-KW"/>
</dbReference>
<dbReference type="GO" id="GO:0003935">
    <property type="term" value="F:GTP cyclohydrolase II activity"/>
    <property type="evidence" value="ECO:0007669"/>
    <property type="project" value="UniProtKB-UniRule"/>
</dbReference>
<dbReference type="GO" id="GO:0008270">
    <property type="term" value="F:zinc ion binding"/>
    <property type="evidence" value="ECO:0007669"/>
    <property type="project" value="UniProtKB-UniRule"/>
</dbReference>
<dbReference type="GO" id="GO:0009231">
    <property type="term" value="P:riboflavin biosynthetic process"/>
    <property type="evidence" value="ECO:0007669"/>
    <property type="project" value="UniProtKB-UniRule"/>
</dbReference>
<dbReference type="CDD" id="cd00641">
    <property type="entry name" value="GTP_cyclohydro2"/>
    <property type="match status" value="1"/>
</dbReference>
<dbReference type="FunFam" id="3.40.50.10990:FF:000002">
    <property type="entry name" value="GTP cyclohydrolase-2"/>
    <property type="match status" value="1"/>
</dbReference>
<dbReference type="Gene3D" id="3.40.50.10990">
    <property type="entry name" value="GTP cyclohydrolase II"/>
    <property type="match status" value="1"/>
</dbReference>
<dbReference type="HAMAP" id="MF_00179">
    <property type="entry name" value="RibA"/>
    <property type="match status" value="1"/>
</dbReference>
<dbReference type="InterPro" id="IPR032677">
    <property type="entry name" value="GTP_cyclohydro_II"/>
</dbReference>
<dbReference type="InterPro" id="IPR000926">
    <property type="entry name" value="RibA"/>
</dbReference>
<dbReference type="InterPro" id="IPR036144">
    <property type="entry name" value="RibA-like_sf"/>
</dbReference>
<dbReference type="NCBIfam" id="NF001591">
    <property type="entry name" value="PRK00393.1"/>
    <property type="match status" value="1"/>
</dbReference>
<dbReference type="NCBIfam" id="TIGR00505">
    <property type="entry name" value="ribA"/>
    <property type="match status" value="1"/>
</dbReference>
<dbReference type="PANTHER" id="PTHR21327:SF18">
    <property type="entry name" value="3,4-DIHYDROXY-2-BUTANONE 4-PHOSPHATE SYNTHASE"/>
    <property type="match status" value="1"/>
</dbReference>
<dbReference type="PANTHER" id="PTHR21327">
    <property type="entry name" value="GTP CYCLOHYDROLASE II-RELATED"/>
    <property type="match status" value="1"/>
</dbReference>
<dbReference type="Pfam" id="PF00925">
    <property type="entry name" value="GTP_cyclohydro2"/>
    <property type="match status" value="1"/>
</dbReference>
<dbReference type="SUPFAM" id="SSF142695">
    <property type="entry name" value="RibA-like"/>
    <property type="match status" value="1"/>
</dbReference>
<organism>
    <name type="scientific">Shewanella sediminis (strain HAW-EB3)</name>
    <dbReference type="NCBI Taxonomy" id="425104"/>
    <lineage>
        <taxon>Bacteria</taxon>
        <taxon>Pseudomonadati</taxon>
        <taxon>Pseudomonadota</taxon>
        <taxon>Gammaproteobacteria</taxon>
        <taxon>Alteromonadales</taxon>
        <taxon>Shewanellaceae</taxon>
        <taxon>Shewanella</taxon>
    </lineage>
</organism>
<protein>
    <recommendedName>
        <fullName evidence="1">GTP cyclohydrolase-2</fullName>
        <ecNumber evidence="1">3.5.4.25</ecNumber>
    </recommendedName>
    <alternativeName>
        <fullName evidence="1">GTP cyclohydrolase II</fullName>
    </alternativeName>
</protein>
<accession>A8FTP1</accession>
<sequence length="205" mass="23036">MSIKYVASSKLPTPWGVFTMHGFEDSDTGKEHVALTLGTLDANTPILGRIHSECLTGDALFSLRCDCGFQLQTAMQNIAEAGQGFILYLRQEGRGIGLLNKIRAYELQDQGANTVEANERLGFPADMRKYDMILPMMEKIGIKQVKLMTNNPRKVKAMKELGIEVVERIPLQVGKNRYNEGYLKTKSTELGHMMSEYHFTGEEKE</sequence>
<comment type="function">
    <text evidence="1">Catalyzes the conversion of GTP to 2,5-diamino-6-ribosylamino-4(3H)-pyrimidinone 5'-phosphate (DARP), formate and pyrophosphate.</text>
</comment>
<comment type="catalytic activity">
    <reaction evidence="1">
        <text>GTP + 4 H2O = 2,5-diamino-6-hydroxy-4-(5-phosphoribosylamino)-pyrimidine + formate + 2 phosphate + 3 H(+)</text>
        <dbReference type="Rhea" id="RHEA:23704"/>
        <dbReference type="ChEBI" id="CHEBI:15377"/>
        <dbReference type="ChEBI" id="CHEBI:15378"/>
        <dbReference type="ChEBI" id="CHEBI:15740"/>
        <dbReference type="ChEBI" id="CHEBI:37565"/>
        <dbReference type="ChEBI" id="CHEBI:43474"/>
        <dbReference type="ChEBI" id="CHEBI:58614"/>
        <dbReference type="EC" id="3.5.4.25"/>
    </reaction>
</comment>
<comment type="cofactor">
    <cofactor evidence="1">
        <name>Zn(2+)</name>
        <dbReference type="ChEBI" id="CHEBI:29105"/>
    </cofactor>
    <text evidence="1">Binds 1 zinc ion per subunit.</text>
</comment>
<comment type="pathway">
    <text evidence="1">Cofactor biosynthesis; riboflavin biosynthesis; 5-amino-6-(D-ribitylamino)uracil from GTP: step 1/4.</text>
</comment>
<comment type="similarity">
    <text evidence="1">Belongs to the GTP cyclohydrolase II family.</text>
</comment>
<keyword id="KW-0342">GTP-binding</keyword>
<keyword id="KW-0378">Hydrolase</keyword>
<keyword id="KW-0479">Metal-binding</keyword>
<keyword id="KW-0547">Nucleotide-binding</keyword>
<keyword id="KW-1185">Reference proteome</keyword>
<keyword id="KW-0686">Riboflavin biosynthesis</keyword>
<keyword id="KW-0862">Zinc</keyword>
<name>RIBA_SHESH</name>
<reference key="1">
    <citation type="submission" date="2007-08" db="EMBL/GenBank/DDBJ databases">
        <title>Complete sequence of Shewanella sediminis HAW-EB3.</title>
        <authorList>
            <consortium name="US DOE Joint Genome Institute"/>
            <person name="Copeland A."/>
            <person name="Lucas S."/>
            <person name="Lapidus A."/>
            <person name="Barry K."/>
            <person name="Glavina del Rio T."/>
            <person name="Dalin E."/>
            <person name="Tice H."/>
            <person name="Pitluck S."/>
            <person name="Chertkov O."/>
            <person name="Brettin T."/>
            <person name="Bruce D."/>
            <person name="Detter J.C."/>
            <person name="Han C."/>
            <person name="Schmutz J."/>
            <person name="Larimer F."/>
            <person name="Land M."/>
            <person name="Hauser L."/>
            <person name="Kyrpides N."/>
            <person name="Kim E."/>
            <person name="Zhao J.-S."/>
            <person name="Richardson P."/>
        </authorList>
    </citation>
    <scope>NUCLEOTIDE SEQUENCE [LARGE SCALE GENOMIC DNA]</scope>
    <source>
        <strain>HAW-EB3</strain>
    </source>
</reference>